<gene>
    <name evidence="1" type="primary">mnmE</name>
    <name evidence="1" type="synonym">trmE</name>
    <name type="ordered locus">SPA3687</name>
</gene>
<organism>
    <name type="scientific">Salmonella paratyphi A (strain ATCC 9150 / SARB42)</name>
    <dbReference type="NCBI Taxonomy" id="295319"/>
    <lineage>
        <taxon>Bacteria</taxon>
        <taxon>Pseudomonadati</taxon>
        <taxon>Pseudomonadota</taxon>
        <taxon>Gammaproteobacteria</taxon>
        <taxon>Enterobacterales</taxon>
        <taxon>Enterobacteriaceae</taxon>
        <taxon>Salmonella</taxon>
    </lineage>
</organism>
<accession>Q5PKU1</accession>
<name>MNME_SALPA</name>
<evidence type="ECO:0000255" key="1">
    <source>
        <dbReference type="HAMAP-Rule" id="MF_00379"/>
    </source>
</evidence>
<comment type="function">
    <text evidence="1">Exhibits a very high intrinsic GTPase hydrolysis rate. Involved in the addition of a carboxymethylaminomethyl (cmnm) group at the wobble position (U34) of certain tRNAs, forming tRNA-cmnm(5)s(2)U34.</text>
</comment>
<comment type="cofactor">
    <cofactor evidence="1">
        <name>K(+)</name>
        <dbReference type="ChEBI" id="CHEBI:29103"/>
    </cofactor>
    <text evidence="1">Binds 1 potassium ion per subunit.</text>
</comment>
<comment type="subunit">
    <text evidence="1">Homodimer. Heterotetramer of two MnmE and two MnmG subunits.</text>
</comment>
<comment type="subcellular location">
    <subcellularLocation>
        <location evidence="1">Cytoplasm</location>
    </subcellularLocation>
</comment>
<comment type="similarity">
    <text evidence="1">Belongs to the TRAFAC class TrmE-Era-EngA-EngB-Septin-like GTPase superfamily. TrmE GTPase family.</text>
</comment>
<protein>
    <recommendedName>
        <fullName evidence="1">tRNA modification GTPase MnmE</fullName>
        <ecNumber evidence="1">3.6.-.-</ecNumber>
    </recommendedName>
</protein>
<sequence length="454" mass="49037">MSHNDTIVAQATPPGRGGVGILRISGLKARGVAQEVLGKLPKPRYADYLPFKDVDGSALDQGIALWFPGPNSFTGEDVLELQGHGGPVILDLLLKRILTLPGVRIARPGEFSERAFLNDKLDLAQAEAIADLIDASSEQAARSALNSLQGAFSARVNHLVEALTHLRIYVEAAIDFPDEEIDFLSDGKIEAQLNGVIADLDAVRTEARQGSLLREGMKVVIAGRPNAGKSSLLNALAGREAAIVTDIAGTTRDVLREHIHIDGMPLHIIDTAGLRDANDEVERIGIERAWQEIEQADRVLFMVDGTTTDAVDPADIWPDFIARLPKNLPITVVRNKADITGETLGISEVNGHSLVRLSARTGEGVDVLRNNLKQSMGFETNMEGGFLARRRHLQALAEAANHLEQGKAQLLGAWAGELLAEELRLAQQSLSEITGEFTSDDLLGRIFSSFCIGK</sequence>
<dbReference type="EC" id="3.6.-.-" evidence="1"/>
<dbReference type="EMBL" id="CP000026">
    <property type="protein sequence ID" value="AAV79479.1"/>
    <property type="molecule type" value="Genomic_DNA"/>
</dbReference>
<dbReference type="RefSeq" id="WP_000019086.1">
    <property type="nucleotide sequence ID" value="NC_006511.1"/>
</dbReference>
<dbReference type="SMR" id="Q5PKU1"/>
<dbReference type="KEGG" id="spt:SPA3687"/>
<dbReference type="HOGENOM" id="CLU_019624_4_1_6"/>
<dbReference type="Proteomes" id="UP000008185">
    <property type="component" value="Chromosome"/>
</dbReference>
<dbReference type="GO" id="GO:0005829">
    <property type="term" value="C:cytosol"/>
    <property type="evidence" value="ECO:0007669"/>
    <property type="project" value="TreeGrafter"/>
</dbReference>
<dbReference type="GO" id="GO:0005525">
    <property type="term" value="F:GTP binding"/>
    <property type="evidence" value="ECO:0007669"/>
    <property type="project" value="UniProtKB-UniRule"/>
</dbReference>
<dbReference type="GO" id="GO:0003924">
    <property type="term" value="F:GTPase activity"/>
    <property type="evidence" value="ECO:0007669"/>
    <property type="project" value="UniProtKB-UniRule"/>
</dbReference>
<dbReference type="GO" id="GO:0046872">
    <property type="term" value="F:metal ion binding"/>
    <property type="evidence" value="ECO:0007669"/>
    <property type="project" value="UniProtKB-KW"/>
</dbReference>
<dbReference type="GO" id="GO:0030488">
    <property type="term" value="P:tRNA methylation"/>
    <property type="evidence" value="ECO:0007669"/>
    <property type="project" value="TreeGrafter"/>
</dbReference>
<dbReference type="GO" id="GO:0002098">
    <property type="term" value="P:tRNA wobble uridine modification"/>
    <property type="evidence" value="ECO:0007669"/>
    <property type="project" value="TreeGrafter"/>
</dbReference>
<dbReference type="CDD" id="cd04164">
    <property type="entry name" value="trmE"/>
    <property type="match status" value="1"/>
</dbReference>
<dbReference type="CDD" id="cd14858">
    <property type="entry name" value="TrmE_N"/>
    <property type="match status" value="1"/>
</dbReference>
<dbReference type="FunFam" id="3.30.1360.120:FF:000001">
    <property type="entry name" value="tRNA modification GTPase MnmE"/>
    <property type="match status" value="1"/>
</dbReference>
<dbReference type="FunFam" id="3.40.50.300:FF:000249">
    <property type="entry name" value="tRNA modification GTPase MnmE"/>
    <property type="match status" value="1"/>
</dbReference>
<dbReference type="Gene3D" id="3.40.50.300">
    <property type="entry name" value="P-loop containing nucleotide triphosphate hydrolases"/>
    <property type="match status" value="1"/>
</dbReference>
<dbReference type="Gene3D" id="3.30.1360.120">
    <property type="entry name" value="Probable tRNA modification gtpase trme, domain 1"/>
    <property type="match status" value="1"/>
</dbReference>
<dbReference type="Gene3D" id="1.20.120.430">
    <property type="entry name" value="tRNA modification GTPase MnmE domain 2"/>
    <property type="match status" value="1"/>
</dbReference>
<dbReference type="HAMAP" id="MF_00379">
    <property type="entry name" value="GTPase_MnmE"/>
    <property type="match status" value="1"/>
</dbReference>
<dbReference type="InterPro" id="IPR031168">
    <property type="entry name" value="G_TrmE"/>
</dbReference>
<dbReference type="InterPro" id="IPR006073">
    <property type="entry name" value="GTP-bd"/>
</dbReference>
<dbReference type="InterPro" id="IPR018948">
    <property type="entry name" value="GTP-bd_TrmE_N"/>
</dbReference>
<dbReference type="InterPro" id="IPR004520">
    <property type="entry name" value="GTPase_MnmE"/>
</dbReference>
<dbReference type="InterPro" id="IPR027368">
    <property type="entry name" value="MnmE_dom2"/>
</dbReference>
<dbReference type="InterPro" id="IPR025867">
    <property type="entry name" value="MnmE_helical"/>
</dbReference>
<dbReference type="InterPro" id="IPR027417">
    <property type="entry name" value="P-loop_NTPase"/>
</dbReference>
<dbReference type="InterPro" id="IPR005225">
    <property type="entry name" value="Small_GTP-bd"/>
</dbReference>
<dbReference type="InterPro" id="IPR027266">
    <property type="entry name" value="TrmE/GcvT_dom1"/>
</dbReference>
<dbReference type="NCBIfam" id="TIGR00450">
    <property type="entry name" value="mnmE_trmE_thdF"/>
    <property type="match status" value="1"/>
</dbReference>
<dbReference type="NCBIfam" id="NF003661">
    <property type="entry name" value="PRK05291.1-3"/>
    <property type="match status" value="1"/>
</dbReference>
<dbReference type="NCBIfam" id="TIGR00231">
    <property type="entry name" value="small_GTP"/>
    <property type="match status" value="1"/>
</dbReference>
<dbReference type="PANTHER" id="PTHR42714">
    <property type="entry name" value="TRNA MODIFICATION GTPASE GTPBP3"/>
    <property type="match status" value="1"/>
</dbReference>
<dbReference type="PANTHER" id="PTHR42714:SF2">
    <property type="entry name" value="TRNA MODIFICATION GTPASE GTPBP3, MITOCHONDRIAL"/>
    <property type="match status" value="1"/>
</dbReference>
<dbReference type="Pfam" id="PF01926">
    <property type="entry name" value="MMR_HSR1"/>
    <property type="match status" value="1"/>
</dbReference>
<dbReference type="Pfam" id="PF12631">
    <property type="entry name" value="MnmE_helical"/>
    <property type="match status" value="1"/>
</dbReference>
<dbReference type="Pfam" id="PF10396">
    <property type="entry name" value="TrmE_N"/>
    <property type="match status" value="1"/>
</dbReference>
<dbReference type="SUPFAM" id="SSF52540">
    <property type="entry name" value="P-loop containing nucleoside triphosphate hydrolases"/>
    <property type="match status" value="1"/>
</dbReference>
<dbReference type="SUPFAM" id="SSF116878">
    <property type="entry name" value="TrmE connector domain"/>
    <property type="match status" value="1"/>
</dbReference>
<dbReference type="PROSITE" id="PS51709">
    <property type="entry name" value="G_TRME"/>
    <property type="match status" value="1"/>
</dbReference>
<keyword id="KW-0963">Cytoplasm</keyword>
<keyword id="KW-0342">GTP-binding</keyword>
<keyword id="KW-0378">Hydrolase</keyword>
<keyword id="KW-0460">Magnesium</keyword>
<keyword id="KW-0479">Metal-binding</keyword>
<keyword id="KW-0547">Nucleotide-binding</keyword>
<keyword id="KW-0630">Potassium</keyword>
<keyword id="KW-0819">tRNA processing</keyword>
<reference key="1">
    <citation type="journal article" date="2004" name="Nat. Genet.">
        <title>Comparison of genome degradation in Paratyphi A and Typhi, human-restricted serovars of Salmonella enterica that cause typhoid.</title>
        <authorList>
            <person name="McClelland M."/>
            <person name="Sanderson K.E."/>
            <person name="Clifton S.W."/>
            <person name="Latreille P."/>
            <person name="Porwollik S."/>
            <person name="Sabo A."/>
            <person name="Meyer R."/>
            <person name="Bieri T."/>
            <person name="Ozersky P."/>
            <person name="McLellan M."/>
            <person name="Harkins C.R."/>
            <person name="Wang C."/>
            <person name="Nguyen C."/>
            <person name="Berghoff A."/>
            <person name="Elliott G."/>
            <person name="Kohlberg S."/>
            <person name="Strong C."/>
            <person name="Du F."/>
            <person name="Carter J."/>
            <person name="Kremizki C."/>
            <person name="Layman D."/>
            <person name="Leonard S."/>
            <person name="Sun H."/>
            <person name="Fulton L."/>
            <person name="Nash W."/>
            <person name="Miner T."/>
            <person name="Minx P."/>
            <person name="Delehaunty K."/>
            <person name="Fronick C."/>
            <person name="Magrini V."/>
            <person name="Nhan M."/>
            <person name="Warren W."/>
            <person name="Florea L."/>
            <person name="Spieth J."/>
            <person name="Wilson R.K."/>
        </authorList>
    </citation>
    <scope>NUCLEOTIDE SEQUENCE [LARGE SCALE GENOMIC DNA]</scope>
    <source>
        <strain>ATCC 9150 / SARB42</strain>
    </source>
</reference>
<proteinExistence type="inferred from homology"/>
<feature type="chain" id="PRO_1000048871" description="tRNA modification GTPase MnmE">
    <location>
        <begin position="1"/>
        <end position="454"/>
    </location>
</feature>
<feature type="domain" description="TrmE-type G">
    <location>
        <begin position="216"/>
        <end position="377"/>
    </location>
</feature>
<feature type="binding site" evidence="1">
    <location>
        <position position="23"/>
    </location>
    <ligand>
        <name>(6S)-5-formyl-5,6,7,8-tetrahydrofolate</name>
        <dbReference type="ChEBI" id="CHEBI:57457"/>
    </ligand>
</feature>
<feature type="binding site" evidence="1">
    <location>
        <position position="80"/>
    </location>
    <ligand>
        <name>(6S)-5-formyl-5,6,7,8-tetrahydrofolate</name>
        <dbReference type="ChEBI" id="CHEBI:57457"/>
    </ligand>
</feature>
<feature type="binding site" evidence="1">
    <location>
        <position position="120"/>
    </location>
    <ligand>
        <name>(6S)-5-formyl-5,6,7,8-tetrahydrofolate</name>
        <dbReference type="ChEBI" id="CHEBI:57457"/>
    </ligand>
</feature>
<feature type="binding site" evidence="1">
    <location>
        <begin position="226"/>
        <end position="231"/>
    </location>
    <ligand>
        <name>GTP</name>
        <dbReference type="ChEBI" id="CHEBI:37565"/>
    </ligand>
</feature>
<feature type="binding site" evidence="1">
    <location>
        <position position="226"/>
    </location>
    <ligand>
        <name>K(+)</name>
        <dbReference type="ChEBI" id="CHEBI:29103"/>
    </ligand>
</feature>
<feature type="binding site" evidence="1">
    <location>
        <position position="230"/>
    </location>
    <ligand>
        <name>Mg(2+)</name>
        <dbReference type="ChEBI" id="CHEBI:18420"/>
    </ligand>
</feature>
<feature type="binding site" evidence="1">
    <location>
        <begin position="245"/>
        <end position="251"/>
    </location>
    <ligand>
        <name>GTP</name>
        <dbReference type="ChEBI" id="CHEBI:37565"/>
    </ligand>
</feature>
<feature type="binding site" evidence="1">
    <location>
        <position position="245"/>
    </location>
    <ligand>
        <name>K(+)</name>
        <dbReference type="ChEBI" id="CHEBI:29103"/>
    </ligand>
</feature>
<feature type="binding site" evidence="1">
    <location>
        <position position="247"/>
    </location>
    <ligand>
        <name>K(+)</name>
        <dbReference type="ChEBI" id="CHEBI:29103"/>
    </ligand>
</feature>
<feature type="binding site" evidence="1">
    <location>
        <position position="250"/>
    </location>
    <ligand>
        <name>K(+)</name>
        <dbReference type="ChEBI" id="CHEBI:29103"/>
    </ligand>
</feature>
<feature type="binding site" evidence="1">
    <location>
        <position position="251"/>
    </location>
    <ligand>
        <name>Mg(2+)</name>
        <dbReference type="ChEBI" id="CHEBI:18420"/>
    </ligand>
</feature>
<feature type="binding site" evidence="1">
    <location>
        <begin position="270"/>
        <end position="273"/>
    </location>
    <ligand>
        <name>GTP</name>
        <dbReference type="ChEBI" id="CHEBI:37565"/>
    </ligand>
</feature>
<feature type="binding site" evidence="1">
    <location>
        <begin position="335"/>
        <end position="338"/>
    </location>
    <ligand>
        <name>GTP</name>
        <dbReference type="ChEBI" id="CHEBI:37565"/>
    </ligand>
</feature>
<feature type="binding site" evidence="1">
    <location>
        <begin position="358"/>
        <end position="360"/>
    </location>
    <ligand>
        <name>GTP</name>
        <dbReference type="ChEBI" id="CHEBI:37565"/>
    </ligand>
</feature>
<feature type="binding site" evidence="1">
    <location>
        <position position="454"/>
    </location>
    <ligand>
        <name>(6S)-5-formyl-5,6,7,8-tetrahydrofolate</name>
        <dbReference type="ChEBI" id="CHEBI:57457"/>
    </ligand>
</feature>